<keyword id="KW-0256">Endoplasmic reticulum</keyword>
<keyword id="KW-0275">Fatty acid biosynthesis</keyword>
<keyword id="KW-0276">Fatty acid metabolism</keyword>
<keyword id="KW-0444">Lipid biosynthesis</keyword>
<keyword id="KW-0443">Lipid metabolism</keyword>
<keyword id="KW-0472">Membrane</keyword>
<keyword id="KW-1185">Reference proteome</keyword>
<keyword id="KW-0808">Transferase</keyword>
<keyword id="KW-0812">Transmembrane</keyword>
<keyword id="KW-1133">Transmembrane helix</keyword>
<proteinExistence type="evidence at protein level"/>
<comment type="function">
    <text evidence="4">Involved in the synthesis of fatty acids (PubMed:16923389). Elongates C14 fatty acids to C18 (PubMed:16923389).</text>
</comment>
<comment type="catalytic activity">
    <reaction evidence="4">
        <text>an acyl-CoA + malonyl-CoA + H(+) = a 3-oxoacyl-CoA + CO2 + CoA</text>
        <dbReference type="Rhea" id="RHEA:50252"/>
        <dbReference type="ChEBI" id="CHEBI:15378"/>
        <dbReference type="ChEBI" id="CHEBI:16526"/>
        <dbReference type="ChEBI" id="CHEBI:57287"/>
        <dbReference type="ChEBI" id="CHEBI:57384"/>
        <dbReference type="ChEBI" id="CHEBI:58342"/>
        <dbReference type="ChEBI" id="CHEBI:90726"/>
    </reaction>
    <physiologicalReaction direction="left-to-right" evidence="4">
        <dbReference type="Rhea" id="RHEA:50253"/>
    </physiologicalReaction>
</comment>
<comment type="pathway">
    <text evidence="4">Lipid metabolism; fatty acid biosynthesis.</text>
</comment>
<comment type="subcellular location">
    <subcellularLocation>
        <location evidence="4">Endoplasmic reticulum membrane</location>
        <topology evidence="2">Multi-pass membrane protein</topology>
    </subcellularLocation>
    <text evidence="4">Localizes predominantly in the perinuclear region.</text>
</comment>
<comment type="disruption phenotype">
    <text evidence="4">Genetic disruption in bloodstream form parasites reduces fatty acid synthesis from C14- and C16-CoA primers (PubMed:16923389). RNAi-mediated knockdown in tsetse fly procyclic form parasites results in reduced fatty acid synthesis (PubMed:16923389).</text>
</comment>
<comment type="similarity">
    <text evidence="3">Belongs to the ELO family.</text>
</comment>
<protein>
    <recommendedName>
        <fullName evidence="5">Fatty acid elongase 3</fullName>
        <ecNumber evidence="4">2.3.1.-</ecNumber>
    </recommendedName>
    <alternativeName>
        <fullName evidence="5">Beta-ketoacyl-CoA synthase</fullName>
    </alternativeName>
    <alternativeName>
        <fullName evidence="3">Elongation of fatty acids protein</fullName>
    </alternativeName>
</protein>
<sequence length="301" mass="34398">MLMNFGGSYDAYINNFQGTFLAEWMLDHPSVPYIAGVMYLILVLYVPKSIMASQPPLNLRAANIVWNLFLTLFSMCGAYYTVPYLVKAFMNPEIVMAASGIKLDANTSPIITHSGFYTTTCALADSFYFNGDVGFWVALFALSKIPEMIDTAFLVFQKKPVIFLHWYHHLTVMLFCWFAYVQKISSGLWFASMNYSVHSIMYLYYFVCACGHRRLVRPFAPIITFVQIFQMVVGTIVVCYTYTVKHVLGRSCTVTDFSLHTGLVMYVSYLLLFSQLFYRSYLSPRDKASIPHVAAEIKKKE</sequence>
<reference evidence="8" key="1">
    <citation type="journal article" date="2005" name="Science">
        <title>Comparative genomics of trypanosomatid parasitic protozoa.</title>
        <authorList>
            <person name="El-Sayed N.M."/>
            <person name="Myler P.J."/>
            <person name="Blandin G."/>
            <person name="Berriman M."/>
            <person name="Crabtree J."/>
            <person name="Aggarwal G."/>
            <person name="Caler E."/>
            <person name="Renauld H."/>
            <person name="Worthey E.A."/>
            <person name="Hertz-Fowler C."/>
            <person name="Ghedin E."/>
            <person name="Peacock C."/>
            <person name="Bartholomeu D.C."/>
            <person name="Haas B.J."/>
            <person name="Tran A.N."/>
            <person name="Wortman J.R."/>
            <person name="Alsmark U.C."/>
            <person name="Angiuoli S."/>
            <person name="Anupama A."/>
            <person name="Badger J."/>
            <person name="Bringaud F."/>
            <person name="Cadag E."/>
            <person name="Carlton J.M."/>
            <person name="Cerqueira G.C."/>
            <person name="Creasy T."/>
            <person name="Delcher A.L."/>
            <person name="Djikeng A."/>
            <person name="Embley T.M."/>
            <person name="Hauser C."/>
            <person name="Ivens A.C."/>
            <person name="Kummerfeld S.K."/>
            <person name="Pereira-Leal J.B."/>
            <person name="Nilsson D."/>
            <person name="Peterson J."/>
            <person name="Salzberg S.L."/>
            <person name="Shallom J."/>
            <person name="Silva J.C."/>
            <person name="Sundaram J."/>
            <person name="Westenberger S."/>
            <person name="White O."/>
            <person name="Melville S.E."/>
            <person name="Donelson J.E."/>
            <person name="Andersson B."/>
            <person name="Stuart K.D."/>
            <person name="Hall N."/>
        </authorList>
    </citation>
    <scope>NUCLEOTIDE SEQUENCE [LARGE SCALE GENOMIC DNA]</scope>
    <source>
        <strain evidence="8">927/4 GUTat10.1</strain>
    </source>
</reference>
<reference evidence="9" key="2">
    <citation type="journal article" date="2005" name="Science">
        <title>The genome of the African trypanosome Trypanosoma brucei.</title>
        <authorList>
            <person name="Berriman M."/>
            <person name="Ghedin E."/>
            <person name="Hertz-Fowler C."/>
            <person name="Blandin G."/>
            <person name="Renauld H."/>
            <person name="Bartholomeu D.C."/>
            <person name="Lennard N.J."/>
            <person name="Caler E."/>
            <person name="Hamlin N.E."/>
            <person name="Haas B."/>
            <person name="Bohme U."/>
            <person name="Hannick L."/>
            <person name="Aslett M.A."/>
            <person name="Shallom J."/>
            <person name="Marcello L."/>
            <person name="Hou L."/>
            <person name="Wickstead B."/>
            <person name="Alsmark U.C.M."/>
            <person name="Arrowsmith C."/>
            <person name="Atkin R.J."/>
            <person name="Barron A.J."/>
            <person name="Bringaud F."/>
            <person name="Brooks K."/>
            <person name="Carrington M."/>
            <person name="Cherevach I."/>
            <person name="Chillingworth T.J."/>
            <person name="Churcher C."/>
            <person name="Clark L.N."/>
            <person name="Corton C.H."/>
            <person name="Cronin A."/>
            <person name="Davies R.M."/>
            <person name="Doggett J."/>
            <person name="Djikeng A."/>
            <person name="Feldblyum T."/>
            <person name="Field M.C."/>
            <person name="Fraser A."/>
            <person name="Goodhead I."/>
            <person name="Hance Z."/>
            <person name="Harper D."/>
            <person name="Harris B.R."/>
            <person name="Hauser H."/>
            <person name="Hostetler J."/>
            <person name="Ivens A."/>
            <person name="Jagels K."/>
            <person name="Johnson D."/>
            <person name="Johnson J."/>
            <person name="Jones K."/>
            <person name="Kerhornou A.X."/>
            <person name="Koo H."/>
            <person name="Larke N."/>
            <person name="Landfear S."/>
            <person name="Larkin C."/>
            <person name="Leech V."/>
            <person name="Line A."/>
            <person name="Lord A."/>
            <person name="Macleod A."/>
            <person name="Mooney P.J."/>
            <person name="Moule S."/>
            <person name="Martin D.M."/>
            <person name="Morgan G.W."/>
            <person name="Mungall K."/>
            <person name="Norbertczak H."/>
            <person name="Ormond D."/>
            <person name="Pai G."/>
            <person name="Peacock C.S."/>
            <person name="Peterson J."/>
            <person name="Quail M.A."/>
            <person name="Rabbinowitsch E."/>
            <person name="Rajandream M.A."/>
            <person name="Reitter C."/>
            <person name="Salzberg S.L."/>
            <person name="Sanders M."/>
            <person name="Schobel S."/>
            <person name="Sharp S."/>
            <person name="Simmonds M."/>
            <person name="Simpson A.J."/>
            <person name="Tallon L."/>
            <person name="Turner C.M."/>
            <person name="Tait A."/>
            <person name="Tivey A.R."/>
            <person name="Van Aken S."/>
            <person name="Walker D."/>
            <person name="Wanless D."/>
            <person name="Wang S."/>
            <person name="White B."/>
            <person name="White O."/>
            <person name="Whitehead S."/>
            <person name="Woodward J."/>
            <person name="Wortman J."/>
            <person name="Adams M.D."/>
            <person name="Embley T.M."/>
            <person name="Gull K."/>
            <person name="Ullu E."/>
            <person name="Barry J.D."/>
            <person name="Fairlamb A.H."/>
            <person name="Opperdoes F."/>
            <person name="Barrell B.G."/>
            <person name="Donelson J.E."/>
            <person name="Hall N."/>
            <person name="Fraser C.M."/>
            <person name="Melville S.E."/>
            <person name="El-Sayed N.M.A."/>
        </authorList>
    </citation>
    <scope>NUCLEOTIDE SEQUENCE [LARGE SCALE GENOMIC DNA]</scope>
    <source>
        <strain evidence="9">927/4 GUTat10.1</strain>
    </source>
</reference>
<reference evidence="6" key="3">
    <citation type="journal article" date="2006" name="Cell">
        <title>Fatty acid synthesis by elongases in trypanosomes.</title>
        <authorList>
            <person name="Lee S.H."/>
            <person name="Stephens J.L."/>
            <person name="Paul K.S."/>
            <person name="Englund P.T."/>
        </authorList>
    </citation>
    <scope>FUNCTION</scope>
    <scope>CATALYTIC ACTIVITY</scope>
    <scope>SUBSTRATE SPECIFICITY</scope>
    <scope>PATHWAY</scope>
    <scope>SUBCELLULAR LOCATION</scope>
    <scope>DISRUPTION PHENOTYPE</scope>
</reference>
<evidence type="ECO:0000250" key="1">
    <source>
        <dbReference type="UniProtKB" id="A1L3X0"/>
    </source>
</evidence>
<evidence type="ECO:0000255" key="2"/>
<evidence type="ECO:0000255" key="3">
    <source>
        <dbReference type="RuleBase" id="RU361115"/>
    </source>
</evidence>
<evidence type="ECO:0000269" key="4">
    <source>
    </source>
</evidence>
<evidence type="ECO:0000303" key="5">
    <source>
    </source>
</evidence>
<evidence type="ECO:0000305" key="6"/>
<evidence type="ECO:0000312" key="7">
    <source>
        <dbReference type="EMBL" id="AAX70673.1"/>
    </source>
</evidence>
<evidence type="ECO:0000312" key="8">
    <source>
        <dbReference type="EMBL" id="AAZ12480.1"/>
    </source>
</evidence>
<evidence type="ECO:0000312" key="9">
    <source>
        <dbReference type="Proteomes" id="UP000008524"/>
    </source>
</evidence>
<dbReference type="EC" id="2.3.1.-" evidence="4"/>
<dbReference type="EMBL" id="CP000070">
    <property type="protein sequence ID" value="AAZ12480.1"/>
    <property type="molecule type" value="Genomic_DNA"/>
</dbReference>
<dbReference type="EMBL" id="AC159450">
    <property type="protein sequence ID" value="AAX70673.1"/>
    <property type="molecule type" value="Genomic_DNA"/>
</dbReference>
<dbReference type="RefSeq" id="XP_846039.1">
    <property type="nucleotide sequence ID" value="XM_840946.1"/>
</dbReference>
<dbReference type="SMR" id="Q57UP6"/>
<dbReference type="FunCoup" id="Q57UP6">
    <property type="interactions" value="171"/>
</dbReference>
<dbReference type="STRING" id="185431.Q57UP6"/>
<dbReference type="PaxDb" id="5691-AAZ12480"/>
<dbReference type="GeneID" id="3658631"/>
<dbReference type="KEGG" id="tbr:Tb927.7.4160"/>
<dbReference type="VEuPathDB" id="TriTrypDB:Tb927.7.4160"/>
<dbReference type="eggNOG" id="KOG3072">
    <property type="taxonomic scope" value="Eukaryota"/>
</dbReference>
<dbReference type="InParanoid" id="Q57UP6"/>
<dbReference type="OMA" id="FGVHAIM"/>
<dbReference type="OrthoDB" id="434092at2759"/>
<dbReference type="UniPathway" id="UPA00094"/>
<dbReference type="Proteomes" id="UP000008524">
    <property type="component" value="Chromosome 7"/>
</dbReference>
<dbReference type="GO" id="GO:0005783">
    <property type="term" value="C:endoplasmic reticulum"/>
    <property type="evidence" value="ECO:0000314"/>
    <property type="project" value="GeneDB"/>
</dbReference>
<dbReference type="GO" id="GO:0005789">
    <property type="term" value="C:endoplasmic reticulum membrane"/>
    <property type="evidence" value="ECO:0000318"/>
    <property type="project" value="GO_Central"/>
</dbReference>
<dbReference type="GO" id="GO:0005634">
    <property type="term" value="C:nucleus"/>
    <property type="evidence" value="ECO:0000314"/>
    <property type="project" value="GeneDB"/>
</dbReference>
<dbReference type="GO" id="GO:0009922">
    <property type="term" value="F:fatty acid elongase activity"/>
    <property type="evidence" value="ECO:0000314"/>
    <property type="project" value="GeneDB"/>
</dbReference>
<dbReference type="GO" id="GO:0030497">
    <property type="term" value="P:fatty acid elongation"/>
    <property type="evidence" value="ECO:0000315"/>
    <property type="project" value="GeneDB"/>
</dbReference>
<dbReference type="GO" id="GO:0034625">
    <property type="term" value="P:fatty acid elongation, monounsaturated fatty acid"/>
    <property type="evidence" value="ECO:0000318"/>
    <property type="project" value="GO_Central"/>
</dbReference>
<dbReference type="GO" id="GO:0034626">
    <property type="term" value="P:fatty acid elongation, polyunsaturated fatty acid"/>
    <property type="evidence" value="ECO:0000318"/>
    <property type="project" value="GO_Central"/>
</dbReference>
<dbReference type="GO" id="GO:0019367">
    <property type="term" value="P:fatty acid elongation, saturated fatty acid"/>
    <property type="evidence" value="ECO:0000318"/>
    <property type="project" value="GO_Central"/>
</dbReference>
<dbReference type="GO" id="GO:0042759">
    <property type="term" value="P:long-chain fatty acid biosynthetic process"/>
    <property type="evidence" value="ECO:0000314"/>
    <property type="project" value="GeneDB"/>
</dbReference>
<dbReference type="GO" id="GO:0030148">
    <property type="term" value="P:sphingolipid biosynthetic process"/>
    <property type="evidence" value="ECO:0000318"/>
    <property type="project" value="GO_Central"/>
</dbReference>
<dbReference type="GO" id="GO:0042761">
    <property type="term" value="P:very long-chain fatty acid biosynthetic process"/>
    <property type="evidence" value="ECO:0000318"/>
    <property type="project" value="GO_Central"/>
</dbReference>
<dbReference type="InterPro" id="IPR030457">
    <property type="entry name" value="ELO_CS"/>
</dbReference>
<dbReference type="InterPro" id="IPR002076">
    <property type="entry name" value="ELO_fam"/>
</dbReference>
<dbReference type="PANTHER" id="PTHR11157:SF17">
    <property type="entry name" value="ELONGATION OF VERY LONG CHAIN FATTY ACIDS PROTEIN 6"/>
    <property type="match status" value="1"/>
</dbReference>
<dbReference type="PANTHER" id="PTHR11157">
    <property type="entry name" value="FATTY ACID ACYL TRANSFERASE-RELATED"/>
    <property type="match status" value="1"/>
</dbReference>
<dbReference type="Pfam" id="PF01151">
    <property type="entry name" value="ELO"/>
    <property type="match status" value="1"/>
</dbReference>
<dbReference type="PROSITE" id="PS01188">
    <property type="entry name" value="ELO"/>
    <property type="match status" value="1"/>
</dbReference>
<accession>Q57UP6</accession>
<accession>D6XIU7</accession>
<feature type="chain" id="PRO_0000459364" description="Fatty acid elongase 3">
    <location>
        <begin position="1"/>
        <end position="301"/>
    </location>
</feature>
<feature type="transmembrane region" description="Helical" evidence="2">
    <location>
        <begin position="31"/>
        <end position="51"/>
    </location>
</feature>
<feature type="transmembrane region" description="Helical" evidence="2">
    <location>
        <begin position="64"/>
        <end position="84"/>
    </location>
</feature>
<feature type="transmembrane region" description="Helical" evidence="2">
    <location>
        <begin position="122"/>
        <end position="142"/>
    </location>
</feature>
<feature type="transmembrane region" description="Helical" evidence="2">
    <location>
        <begin position="161"/>
        <end position="181"/>
    </location>
</feature>
<feature type="transmembrane region" description="Helical" evidence="2">
    <location>
        <begin position="187"/>
        <end position="207"/>
    </location>
</feature>
<feature type="transmembrane region" description="Helical" evidence="2">
    <location>
        <begin position="219"/>
        <end position="239"/>
    </location>
</feature>
<feature type="transmembrane region" description="Helical" evidence="2">
    <location>
        <begin position="257"/>
        <end position="277"/>
    </location>
</feature>
<feature type="short sequence motif" description="HxxHH motif" evidence="5">
    <location>
        <begin position="165"/>
        <end position="169"/>
    </location>
</feature>
<feature type="active site" description="Nucleophile" evidence="1">
    <location>
        <position position="168"/>
    </location>
</feature>
<organism evidence="9">
    <name type="scientific">Trypanosoma brucei brucei (strain 927/4 GUTat10.1)</name>
    <dbReference type="NCBI Taxonomy" id="185431"/>
    <lineage>
        <taxon>Eukaryota</taxon>
        <taxon>Discoba</taxon>
        <taxon>Euglenozoa</taxon>
        <taxon>Kinetoplastea</taxon>
        <taxon>Metakinetoplastina</taxon>
        <taxon>Trypanosomatida</taxon>
        <taxon>Trypanosomatidae</taxon>
        <taxon>Trypanosoma</taxon>
    </lineage>
</organism>
<name>ELO3_TRYB2</name>
<gene>
    <name evidence="5" type="primary">ELO3</name>
    <name evidence="8" type="ORF">Tb07.5F10.400</name>
    <name evidence="7" type="ORF">Tb927.7.4160</name>
</gene>